<reference key="1">
    <citation type="submission" date="2006-03" db="EMBL/GenBank/DDBJ databases">
        <title>Complete sequence of Rhodopseudomonas palustris BisB18.</title>
        <authorList>
            <consortium name="US DOE Joint Genome Institute"/>
            <person name="Copeland A."/>
            <person name="Lucas S."/>
            <person name="Lapidus A."/>
            <person name="Barry K."/>
            <person name="Detter J.C."/>
            <person name="Glavina del Rio T."/>
            <person name="Hammon N."/>
            <person name="Israni S."/>
            <person name="Dalin E."/>
            <person name="Tice H."/>
            <person name="Pitluck S."/>
            <person name="Chain P."/>
            <person name="Malfatti S."/>
            <person name="Shin M."/>
            <person name="Vergez L."/>
            <person name="Schmutz J."/>
            <person name="Larimer F."/>
            <person name="Land M."/>
            <person name="Hauser L."/>
            <person name="Pelletier D.A."/>
            <person name="Kyrpides N."/>
            <person name="Anderson I."/>
            <person name="Oda Y."/>
            <person name="Harwood C.S."/>
            <person name="Richardson P."/>
        </authorList>
    </citation>
    <scope>NUCLEOTIDE SEQUENCE [LARGE SCALE GENOMIC DNA]</scope>
    <source>
        <strain>BisB18</strain>
    </source>
</reference>
<proteinExistence type="inferred from homology"/>
<keyword id="KW-0963">Cytoplasm</keyword>
<keyword id="KW-0227">DNA damage</keyword>
<keyword id="KW-0228">DNA excision</keyword>
<keyword id="KW-0234">DNA repair</keyword>
<keyword id="KW-0267">Excision nuclease</keyword>
<keyword id="KW-0742">SOS response</keyword>
<protein>
    <recommendedName>
        <fullName evidence="1">UvrABC system protein C</fullName>
        <shortName evidence="1">Protein UvrC</shortName>
    </recommendedName>
    <alternativeName>
        <fullName evidence="1">Excinuclease ABC subunit C</fullName>
    </alternativeName>
</protein>
<evidence type="ECO:0000255" key="1">
    <source>
        <dbReference type="HAMAP-Rule" id="MF_00203"/>
    </source>
</evidence>
<evidence type="ECO:0000256" key="2">
    <source>
        <dbReference type="SAM" id="MobiDB-lite"/>
    </source>
</evidence>
<comment type="function">
    <text evidence="1">The UvrABC repair system catalyzes the recognition and processing of DNA lesions. UvrC both incises the 5' and 3' sides of the lesion. The N-terminal half is responsible for the 3' incision and the C-terminal half is responsible for the 5' incision.</text>
</comment>
<comment type="subunit">
    <text evidence="1">Interacts with UvrB in an incision complex.</text>
</comment>
<comment type="subcellular location">
    <subcellularLocation>
        <location evidence="1">Cytoplasm</location>
    </subcellularLocation>
</comment>
<comment type="similarity">
    <text evidence="1">Belongs to the UvrC family.</text>
</comment>
<accession>Q21AW5</accession>
<feature type="chain" id="PRO_0000264937" description="UvrABC system protein C">
    <location>
        <begin position="1"/>
        <end position="699"/>
    </location>
</feature>
<feature type="domain" description="GIY-YIG" evidence="1">
    <location>
        <begin position="92"/>
        <end position="170"/>
    </location>
</feature>
<feature type="domain" description="UVR" evidence="1">
    <location>
        <begin position="280"/>
        <end position="315"/>
    </location>
</feature>
<feature type="region of interest" description="Disordered" evidence="2">
    <location>
        <begin position="1"/>
        <end position="59"/>
    </location>
</feature>
<feature type="compositionally biased region" description="Low complexity" evidence="2">
    <location>
        <begin position="1"/>
        <end position="51"/>
    </location>
</feature>
<dbReference type="EMBL" id="CP000301">
    <property type="protein sequence ID" value="ABD86471.1"/>
    <property type="molecule type" value="Genomic_DNA"/>
</dbReference>
<dbReference type="SMR" id="Q21AW5"/>
<dbReference type="STRING" id="316056.RPC_0901"/>
<dbReference type="KEGG" id="rpc:RPC_0901"/>
<dbReference type="eggNOG" id="COG0322">
    <property type="taxonomic scope" value="Bacteria"/>
</dbReference>
<dbReference type="HOGENOM" id="CLU_014841_3_0_5"/>
<dbReference type="OrthoDB" id="9804933at2"/>
<dbReference type="GO" id="GO:0005737">
    <property type="term" value="C:cytoplasm"/>
    <property type="evidence" value="ECO:0007669"/>
    <property type="project" value="UniProtKB-SubCell"/>
</dbReference>
<dbReference type="GO" id="GO:0009380">
    <property type="term" value="C:excinuclease repair complex"/>
    <property type="evidence" value="ECO:0007669"/>
    <property type="project" value="InterPro"/>
</dbReference>
<dbReference type="GO" id="GO:0003677">
    <property type="term" value="F:DNA binding"/>
    <property type="evidence" value="ECO:0007669"/>
    <property type="project" value="UniProtKB-UniRule"/>
</dbReference>
<dbReference type="GO" id="GO:0009381">
    <property type="term" value="F:excinuclease ABC activity"/>
    <property type="evidence" value="ECO:0007669"/>
    <property type="project" value="UniProtKB-UniRule"/>
</dbReference>
<dbReference type="GO" id="GO:0006289">
    <property type="term" value="P:nucleotide-excision repair"/>
    <property type="evidence" value="ECO:0007669"/>
    <property type="project" value="UniProtKB-UniRule"/>
</dbReference>
<dbReference type="GO" id="GO:0009432">
    <property type="term" value="P:SOS response"/>
    <property type="evidence" value="ECO:0007669"/>
    <property type="project" value="UniProtKB-UniRule"/>
</dbReference>
<dbReference type="CDD" id="cd10434">
    <property type="entry name" value="GIY-YIG_UvrC_Cho"/>
    <property type="match status" value="1"/>
</dbReference>
<dbReference type="FunFam" id="3.30.420.340:FF:000001">
    <property type="entry name" value="UvrABC system protein C"/>
    <property type="match status" value="1"/>
</dbReference>
<dbReference type="FunFam" id="3.40.1440.10:FF:000001">
    <property type="entry name" value="UvrABC system protein C"/>
    <property type="match status" value="1"/>
</dbReference>
<dbReference type="Gene3D" id="1.10.150.20">
    <property type="entry name" value="5' to 3' exonuclease, C-terminal subdomain"/>
    <property type="match status" value="1"/>
</dbReference>
<dbReference type="Gene3D" id="3.40.1440.10">
    <property type="entry name" value="GIY-YIG endonuclease"/>
    <property type="match status" value="1"/>
</dbReference>
<dbReference type="Gene3D" id="4.10.860.10">
    <property type="entry name" value="UVR domain"/>
    <property type="match status" value="1"/>
</dbReference>
<dbReference type="Gene3D" id="3.30.420.340">
    <property type="entry name" value="UvrC, RNAse H endonuclease domain"/>
    <property type="match status" value="1"/>
</dbReference>
<dbReference type="HAMAP" id="MF_00203">
    <property type="entry name" value="UvrC"/>
    <property type="match status" value="1"/>
</dbReference>
<dbReference type="InterPro" id="IPR000305">
    <property type="entry name" value="GIY-YIG_endonuc"/>
</dbReference>
<dbReference type="InterPro" id="IPR035901">
    <property type="entry name" value="GIY-YIG_endonuc_sf"/>
</dbReference>
<dbReference type="InterPro" id="IPR047296">
    <property type="entry name" value="GIY-YIG_UvrC_Cho"/>
</dbReference>
<dbReference type="InterPro" id="IPR003583">
    <property type="entry name" value="Hlx-hairpin-Hlx_DNA-bd_motif"/>
</dbReference>
<dbReference type="InterPro" id="IPR010994">
    <property type="entry name" value="RuvA_2-like"/>
</dbReference>
<dbReference type="InterPro" id="IPR001943">
    <property type="entry name" value="UVR_dom"/>
</dbReference>
<dbReference type="InterPro" id="IPR036876">
    <property type="entry name" value="UVR_dom_sf"/>
</dbReference>
<dbReference type="InterPro" id="IPR050066">
    <property type="entry name" value="UvrABC_protein_C"/>
</dbReference>
<dbReference type="InterPro" id="IPR004791">
    <property type="entry name" value="UvrC"/>
</dbReference>
<dbReference type="InterPro" id="IPR001162">
    <property type="entry name" value="UvrC_RNase_H_dom"/>
</dbReference>
<dbReference type="InterPro" id="IPR038476">
    <property type="entry name" value="UvrC_RNase_H_dom_sf"/>
</dbReference>
<dbReference type="NCBIfam" id="NF001824">
    <property type="entry name" value="PRK00558.1-5"/>
    <property type="match status" value="1"/>
</dbReference>
<dbReference type="NCBIfam" id="TIGR00194">
    <property type="entry name" value="uvrC"/>
    <property type="match status" value="1"/>
</dbReference>
<dbReference type="PANTHER" id="PTHR30562:SF1">
    <property type="entry name" value="UVRABC SYSTEM PROTEIN C"/>
    <property type="match status" value="1"/>
</dbReference>
<dbReference type="PANTHER" id="PTHR30562">
    <property type="entry name" value="UVRC/OXIDOREDUCTASE"/>
    <property type="match status" value="1"/>
</dbReference>
<dbReference type="Pfam" id="PF01541">
    <property type="entry name" value="GIY-YIG"/>
    <property type="match status" value="1"/>
</dbReference>
<dbReference type="Pfam" id="PF14520">
    <property type="entry name" value="HHH_5"/>
    <property type="match status" value="1"/>
</dbReference>
<dbReference type="Pfam" id="PF02151">
    <property type="entry name" value="UVR"/>
    <property type="match status" value="1"/>
</dbReference>
<dbReference type="Pfam" id="PF22920">
    <property type="entry name" value="UvrC_RNaseH"/>
    <property type="match status" value="1"/>
</dbReference>
<dbReference type="Pfam" id="PF08459">
    <property type="entry name" value="UvrC_RNaseH_dom"/>
    <property type="match status" value="1"/>
</dbReference>
<dbReference type="SMART" id="SM00465">
    <property type="entry name" value="GIYc"/>
    <property type="match status" value="1"/>
</dbReference>
<dbReference type="SMART" id="SM00278">
    <property type="entry name" value="HhH1"/>
    <property type="match status" value="2"/>
</dbReference>
<dbReference type="SUPFAM" id="SSF46600">
    <property type="entry name" value="C-terminal UvrC-binding domain of UvrB"/>
    <property type="match status" value="1"/>
</dbReference>
<dbReference type="SUPFAM" id="SSF82771">
    <property type="entry name" value="GIY-YIG endonuclease"/>
    <property type="match status" value="1"/>
</dbReference>
<dbReference type="SUPFAM" id="SSF47781">
    <property type="entry name" value="RuvA domain 2-like"/>
    <property type="match status" value="1"/>
</dbReference>
<dbReference type="PROSITE" id="PS50164">
    <property type="entry name" value="GIY_YIG"/>
    <property type="match status" value="1"/>
</dbReference>
<dbReference type="PROSITE" id="PS50151">
    <property type="entry name" value="UVR"/>
    <property type="match status" value="1"/>
</dbReference>
<dbReference type="PROSITE" id="PS50165">
    <property type="entry name" value="UVRC"/>
    <property type="match status" value="1"/>
</dbReference>
<sequence>MIQHPTDTPEVAADAAAEPERAAGAAGATPQPSQDAVEPAADVDAATASLAAEDDDEPVLPQVPEEAGDEVAAGPLAIGRSAIAQAVRLAPTSPGVYRMLNAASDVLYVGKAKNVKKRLASYARPTGHVVRISRMIAATVSVEIISTATETEALLLEANLIKQLRPRFNVLLRDDKSFPYILITGDHWAPQIIKHRGAQSRPGRYFGPFASVGSVNRTITALQRAFLMRSCTDAFFESRTRPCLLYQIKRCAGPCTGEIDFPGYTALVREATDFLSGRSRLVKQELAGEMEKASAELEFETAALYRDRLAALSAIQSQQGINPRTVEEADVFAIHQEGGYFCVEVFFFRTGQNWGNRAYFPRAEKTFTVEEVLAAFLAQFYDDKAPPKQILLSHRIEECELLAEALCIKSGHKVEILTPQRGEKKELVGHALTNAREALGRKLADTATQTRLLQGLVTTLKLPHTPKRIEVYDNSHIQGTNAVGAMIVAGPDGFIKNQYRKFNIRSEGITPGDDYGMMREVLERRFKRLLAPPPEAEAGKPKPDDEVPQWPDLVIIDGGRGQLNAVQEIFQALGLSTVTLMAVAKGPDRDAGRETLFMPDRLPIKLEPRDPVLYFIQRLRDEAHRFVIGSHRKLRKKDIREAGLQEIPGIGPSRKRALLHHFGTLKEIERASLGDLGKVPGISAESAKRIFDYFHPQPG</sequence>
<name>UVRC_RHOPB</name>
<gene>
    <name evidence="1" type="primary">uvrC</name>
    <name type="ordered locus">RPC_0901</name>
</gene>
<organism>
    <name type="scientific">Rhodopseudomonas palustris (strain BisB18)</name>
    <dbReference type="NCBI Taxonomy" id="316056"/>
    <lineage>
        <taxon>Bacteria</taxon>
        <taxon>Pseudomonadati</taxon>
        <taxon>Pseudomonadota</taxon>
        <taxon>Alphaproteobacteria</taxon>
        <taxon>Hyphomicrobiales</taxon>
        <taxon>Nitrobacteraceae</taxon>
        <taxon>Rhodopseudomonas</taxon>
    </lineage>
</organism>